<organism>
    <name type="scientific">Phalaenopsis aphrodite subsp. formosana</name>
    <name type="common">Moth orchid</name>
    <dbReference type="NCBI Taxonomy" id="308872"/>
    <lineage>
        <taxon>Eukaryota</taxon>
        <taxon>Viridiplantae</taxon>
        <taxon>Streptophyta</taxon>
        <taxon>Embryophyta</taxon>
        <taxon>Tracheophyta</taxon>
        <taxon>Spermatophyta</taxon>
        <taxon>Magnoliopsida</taxon>
        <taxon>Liliopsida</taxon>
        <taxon>Asparagales</taxon>
        <taxon>Orchidaceae</taxon>
        <taxon>Epidendroideae</taxon>
        <taxon>Vandeae</taxon>
        <taxon>Aeridinae</taxon>
        <taxon>Phalaenopsis</taxon>
    </lineage>
</organism>
<proteinExistence type="inferred from homology"/>
<sequence>MNWRSEHIWIELITGSRKTSNFCWACILFLGSLGFLVVGTSSYLGKNLISVFPSQQILFFPQGIVMSFYGIAGLFISSYLWCTISWNVGSGYDRFDRKEGIMSLFRWGFPGRDRRIFLRFFLKDIQSIRMEVREGLFPRRVLYMEIKGQGAIPLTRTDEDLTPREIEQKAAELAYFLRVPIEVF</sequence>
<gene>
    <name evidence="1" type="primary">ycf4</name>
</gene>
<evidence type="ECO:0000255" key="1">
    <source>
        <dbReference type="HAMAP-Rule" id="MF_00437"/>
    </source>
</evidence>
<dbReference type="EMBL" id="AY916449">
    <property type="protein sequence ID" value="AAW82511.1"/>
    <property type="molecule type" value="Genomic_DNA"/>
</dbReference>
<dbReference type="RefSeq" id="YP_358587.1">
    <property type="nucleotide sequence ID" value="NC_007499.1"/>
</dbReference>
<dbReference type="GeneID" id="3741690"/>
<dbReference type="GO" id="GO:0009535">
    <property type="term" value="C:chloroplast thylakoid membrane"/>
    <property type="evidence" value="ECO:0007669"/>
    <property type="project" value="UniProtKB-SubCell"/>
</dbReference>
<dbReference type="GO" id="GO:0009522">
    <property type="term" value="C:photosystem I"/>
    <property type="evidence" value="ECO:0007669"/>
    <property type="project" value="InterPro"/>
</dbReference>
<dbReference type="GO" id="GO:0015979">
    <property type="term" value="P:photosynthesis"/>
    <property type="evidence" value="ECO:0007669"/>
    <property type="project" value="UniProtKB-UniRule"/>
</dbReference>
<dbReference type="HAMAP" id="MF_00437">
    <property type="entry name" value="Ycf4"/>
    <property type="match status" value="1"/>
</dbReference>
<dbReference type="InterPro" id="IPR003359">
    <property type="entry name" value="PSI_Ycf4_assembly"/>
</dbReference>
<dbReference type="PANTHER" id="PTHR33288">
    <property type="match status" value="1"/>
</dbReference>
<dbReference type="PANTHER" id="PTHR33288:SF4">
    <property type="entry name" value="PHOTOSYSTEM I ASSEMBLY PROTEIN YCF4"/>
    <property type="match status" value="1"/>
</dbReference>
<dbReference type="Pfam" id="PF02392">
    <property type="entry name" value="Ycf4"/>
    <property type="match status" value="1"/>
</dbReference>
<accession>Q3BAN1</accession>
<protein>
    <recommendedName>
        <fullName evidence="1">Photosystem I assembly protein Ycf4</fullName>
    </recommendedName>
</protein>
<reference key="1">
    <citation type="journal article" date="2006" name="Mol. Biol. Evol.">
        <title>The chloroplast genome of Phalaenopsis aphrodite (Orchidaceae): comparative analysis of evolutionary rate with that of grasses and its phylogenetic implications.</title>
        <authorList>
            <person name="Chang C.-C."/>
            <person name="Lin H.-C."/>
            <person name="Lin I.-P."/>
            <person name="Chow T.-Y."/>
            <person name="Chen H.-H."/>
            <person name="Chen W.-H."/>
            <person name="Cheng C.-H."/>
            <person name="Lin C.-Y."/>
            <person name="Liu S.-M."/>
            <person name="Chang C.-C."/>
            <person name="Chaw S.-M."/>
        </authorList>
    </citation>
    <scope>NUCLEOTIDE SEQUENCE [LARGE SCALE GENOMIC DNA]</scope>
    <source>
        <strain>cv. Taisugar TS-97</strain>
    </source>
</reference>
<keyword id="KW-0150">Chloroplast</keyword>
<keyword id="KW-0472">Membrane</keyword>
<keyword id="KW-0602">Photosynthesis</keyword>
<keyword id="KW-0934">Plastid</keyword>
<keyword id="KW-0793">Thylakoid</keyword>
<keyword id="KW-0812">Transmembrane</keyword>
<keyword id="KW-1133">Transmembrane helix</keyword>
<geneLocation type="chloroplast"/>
<feature type="chain" id="PRO_0000275666" description="Photosystem I assembly protein Ycf4">
    <location>
        <begin position="1"/>
        <end position="184"/>
    </location>
</feature>
<feature type="transmembrane region" description="Helical" evidence="1">
    <location>
        <begin position="22"/>
        <end position="42"/>
    </location>
</feature>
<feature type="transmembrane region" description="Helical" evidence="1">
    <location>
        <begin position="57"/>
        <end position="77"/>
    </location>
</feature>
<name>YCF4_PHAAO</name>
<comment type="function">
    <text evidence="1">Seems to be required for the assembly of the photosystem I complex.</text>
</comment>
<comment type="subcellular location">
    <subcellularLocation>
        <location evidence="1">Plastid</location>
        <location evidence="1">Chloroplast thylakoid membrane</location>
        <topology evidence="1">Multi-pass membrane protein</topology>
    </subcellularLocation>
</comment>
<comment type="similarity">
    <text evidence="1">Belongs to the Ycf4 family.</text>
</comment>